<keyword id="KW-0963">Cytoplasm</keyword>
<keyword id="KW-0539">Nucleus</keyword>
<keyword id="KW-1185">Reference proteome</keyword>
<keyword id="KW-0694">RNA-binding</keyword>
<keyword id="KW-0813">Transport</keyword>
<keyword id="KW-0819">tRNA processing</keyword>
<keyword id="KW-0820">tRNA-binding</keyword>
<feature type="chain" id="PRO_0000343107" description="Exportin-T">
    <location>
        <begin position="1"/>
        <end position="1106"/>
    </location>
</feature>
<feature type="region of interest" description="Disordered" evidence="2">
    <location>
        <begin position="336"/>
        <end position="357"/>
    </location>
</feature>
<feature type="compositionally biased region" description="Polar residues" evidence="2">
    <location>
        <begin position="343"/>
        <end position="357"/>
    </location>
</feature>
<gene>
    <name type="primary">LOS1</name>
    <name type="ORF">UMAG_11401</name>
</gene>
<dbReference type="EMBL" id="CM003144">
    <property type="protein sequence ID" value="KIS69756.1"/>
    <property type="molecule type" value="Genomic_DNA"/>
</dbReference>
<dbReference type="RefSeq" id="XP_011388857.1">
    <property type="nucleotide sequence ID" value="XM_011390555.1"/>
</dbReference>
<dbReference type="SMR" id="Q4PC84"/>
<dbReference type="FunCoup" id="Q4PC84">
    <property type="interactions" value="659"/>
</dbReference>
<dbReference type="STRING" id="237631.Q4PC84"/>
<dbReference type="EnsemblFungi" id="KIS69756">
    <property type="protein sequence ID" value="KIS69756"/>
    <property type="gene ID" value="UMAG_11401"/>
</dbReference>
<dbReference type="GeneID" id="23567289"/>
<dbReference type="KEGG" id="uma:UMAG_11401"/>
<dbReference type="VEuPathDB" id="FungiDB:UMAG_11401"/>
<dbReference type="eggNOG" id="KOG2021">
    <property type="taxonomic scope" value="Eukaryota"/>
</dbReference>
<dbReference type="InParanoid" id="Q4PC84"/>
<dbReference type="OrthoDB" id="26399at2759"/>
<dbReference type="Proteomes" id="UP000000561">
    <property type="component" value="Chromosome 5"/>
</dbReference>
<dbReference type="GO" id="GO:0005737">
    <property type="term" value="C:cytoplasm"/>
    <property type="evidence" value="ECO:0000318"/>
    <property type="project" value="GO_Central"/>
</dbReference>
<dbReference type="GO" id="GO:0016363">
    <property type="term" value="C:nuclear matrix"/>
    <property type="evidence" value="ECO:0000318"/>
    <property type="project" value="GO_Central"/>
</dbReference>
<dbReference type="GO" id="GO:0005643">
    <property type="term" value="C:nuclear pore"/>
    <property type="evidence" value="ECO:0000318"/>
    <property type="project" value="GO_Central"/>
</dbReference>
<dbReference type="GO" id="GO:0031267">
    <property type="term" value="F:small GTPase binding"/>
    <property type="evidence" value="ECO:0007669"/>
    <property type="project" value="InterPro"/>
</dbReference>
<dbReference type="GO" id="GO:0000049">
    <property type="term" value="F:tRNA binding"/>
    <property type="evidence" value="ECO:0000318"/>
    <property type="project" value="GO_Central"/>
</dbReference>
<dbReference type="GO" id="GO:0008033">
    <property type="term" value="P:tRNA processing"/>
    <property type="evidence" value="ECO:0007669"/>
    <property type="project" value="UniProtKB-KW"/>
</dbReference>
<dbReference type="GO" id="GO:0071528">
    <property type="term" value="P:tRNA re-export from nucleus"/>
    <property type="evidence" value="ECO:0000318"/>
    <property type="project" value="GO_Central"/>
</dbReference>
<dbReference type="Gene3D" id="1.25.10.10">
    <property type="entry name" value="Leucine-rich Repeat Variant"/>
    <property type="match status" value="1"/>
</dbReference>
<dbReference type="InterPro" id="IPR011989">
    <property type="entry name" value="ARM-like"/>
</dbReference>
<dbReference type="InterPro" id="IPR016024">
    <property type="entry name" value="ARM-type_fold"/>
</dbReference>
<dbReference type="InterPro" id="IPR013598">
    <property type="entry name" value="Exportin-1/Importin-b-like"/>
</dbReference>
<dbReference type="InterPro" id="IPR045546">
    <property type="entry name" value="Exportin-T_C"/>
</dbReference>
<dbReference type="InterPro" id="IPR040017">
    <property type="entry name" value="XPOT"/>
</dbReference>
<dbReference type="PANTHER" id="PTHR15952:SF11">
    <property type="entry name" value="EXPORTIN-T"/>
    <property type="match status" value="1"/>
</dbReference>
<dbReference type="PANTHER" id="PTHR15952">
    <property type="entry name" value="EXPORTIN-T/LOS1"/>
    <property type="match status" value="1"/>
</dbReference>
<dbReference type="Pfam" id="PF19282">
    <property type="entry name" value="Exportin-T"/>
    <property type="match status" value="2"/>
</dbReference>
<dbReference type="Pfam" id="PF08389">
    <property type="entry name" value="Xpo1"/>
    <property type="match status" value="1"/>
</dbReference>
<dbReference type="SUPFAM" id="SSF48371">
    <property type="entry name" value="ARM repeat"/>
    <property type="match status" value="1"/>
</dbReference>
<protein>
    <recommendedName>
        <fullName>Exportin-T</fullName>
    </recommendedName>
    <alternativeName>
        <fullName>Exportin(tRNA)</fullName>
    </alternativeName>
    <alternativeName>
        <fullName>Karyopherin-beta</fullName>
    </alternativeName>
    <alternativeName>
        <fullName>tRNA exportin</fullName>
    </alternativeName>
</protein>
<name>XPOT_MYCMD</name>
<comment type="function">
    <text evidence="1">tRNA nucleus export receptor which facilitates tRNA translocation across the nuclear pore complex. Involved in pre-tRNA splicing, probably by affecting the interaction of pre-tRNA with splicing endonuclease (By similarity).</text>
</comment>
<comment type="subcellular location">
    <subcellularLocation>
        <location evidence="1">Nucleus</location>
    </subcellularLocation>
    <subcellularLocation>
        <location evidence="1">Cytoplasm</location>
    </subcellularLocation>
    <text evidence="1">Shuttles between the nucleus and the cytoplasm.</text>
</comment>
<comment type="similarity">
    <text evidence="3">Belongs to the exportin family.</text>
</comment>
<organism>
    <name type="scientific">Mycosarcoma maydis</name>
    <name type="common">Corn smut fungus</name>
    <name type="synonym">Ustilago maydis</name>
    <dbReference type="NCBI Taxonomy" id="5270"/>
    <lineage>
        <taxon>Eukaryota</taxon>
        <taxon>Fungi</taxon>
        <taxon>Dikarya</taxon>
        <taxon>Basidiomycota</taxon>
        <taxon>Ustilaginomycotina</taxon>
        <taxon>Ustilaginomycetes</taxon>
        <taxon>Ustilaginales</taxon>
        <taxon>Ustilaginaceae</taxon>
        <taxon>Mycosarcoma</taxon>
    </lineage>
</organism>
<accession>Q4PC84</accession>
<accession>A0A0D1E1F7</accession>
<proteinExistence type="inferred from homology"/>
<reference key="1">
    <citation type="journal article" date="2006" name="Nature">
        <title>Insights from the genome of the biotrophic fungal plant pathogen Ustilago maydis.</title>
        <authorList>
            <person name="Kaemper J."/>
            <person name="Kahmann R."/>
            <person name="Boelker M."/>
            <person name="Ma L.-J."/>
            <person name="Brefort T."/>
            <person name="Saville B.J."/>
            <person name="Banuett F."/>
            <person name="Kronstad J.W."/>
            <person name="Gold S.E."/>
            <person name="Mueller O."/>
            <person name="Perlin M.H."/>
            <person name="Woesten H.A.B."/>
            <person name="de Vries R."/>
            <person name="Ruiz-Herrera J."/>
            <person name="Reynaga-Pena C.G."/>
            <person name="Snetselaar K."/>
            <person name="McCann M."/>
            <person name="Perez-Martin J."/>
            <person name="Feldbruegge M."/>
            <person name="Basse C.W."/>
            <person name="Steinberg G."/>
            <person name="Ibeas J.I."/>
            <person name="Holloman W."/>
            <person name="Guzman P."/>
            <person name="Farman M.L."/>
            <person name="Stajich J.E."/>
            <person name="Sentandreu R."/>
            <person name="Gonzalez-Prieto J.M."/>
            <person name="Kennell J.C."/>
            <person name="Molina L."/>
            <person name="Schirawski J."/>
            <person name="Mendoza-Mendoza A."/>
            <person name="Greilinger D."/>
            <person name="Muench K."/>
            <person name="Roessel N."/>
            <person name="Scherer M."/>
            <person name="Vranes M."/>
            <person name="Ladendorf O."/>
            <person name="Vincon V."/>
            <person name="Fuchs U."/>
            <person name="Sandrock B."/>
            <person name="Meng S."/>
            <person name="Ho E.C.H."/>
            <person name="Cahill M.J."/>
            <person name="Boyce K.J."/>
            <person name="Klose J."/>
            <person name="Klosterman S.J."/>
            <person name="Deelstra H.J."/>
            <person name="Ortiz-Castellanos L."/>
            <person name="Li W."/>
            <person name="Sanchez-Alonso P."/>
            <person name="Schreier P.H."/>
            <person name="Haeuser-Hahn I."/>
            <person name="Vaupel M."/>
            <person name="Koopmann E."/>
            <person name="Friedrich G."/>
            <person name="Voss H."/>
            <person name="Schlueter T."/>
            <person name="Margolis J."/>
            <person name="Platt D."/>
            <person name="Swimmer C."/>
            <person name="Gnirke A."/>
            <person name="Chen F."/>
            <person name="Vysotskaia V."/>
            <person name="Mannhaupt G."/>
            <person name="Gueldener U."/>
            <person name="Muensterkoetter M."/>
            <person name="Haase D."/>
            <person name="Oesterheld M."/>
            <person name="Mewes H.-W."/>
            <person name="Mauceli E.W."/>
            <person name="DeCaprio D."/>
            <person name="Wade C.M."/>
            <person name="Butler J."/>
            <person name="Young S.K."/>
            <person name="Jaffe D.B."/>
            <person name="Calvo S.E."/>
            <person name="Nusbaum C."/>
            <person name="Galagan J.E."/>
            <person name="Birren B.W."/>
        </authorList>
    </citation>
    <scope>NUCLEOTIDE SEQUENCE [LARGE SCALE GENOMIC DNA]</scope>
    <source>
        <strain>DSM 14603 / FGSC 9021 / UM521</strain>
    </source>
</reference>
<reference key="2">
    <citation type="submission" date="2014-09" db="EMBL/GenBank/DDBJ databases">
        <authorList>
            <person name="Gueldener U."/>
            <person name="Muensterkoetter M."/>
            <person name="Walter M.C."/>
            <person name="Mannhaupt G."/>
            <person name="Kahmann R."/>
        </authorList>
    </citation>
    <scope>GENOME REANNOTATION</scope>
    <source>
        <strain>DSM 14603 / FGSC 9021 / UM521</strain>
    </source>
</reference>
<sequence length="1106" mass="121188">MEEQLIQAVEIASNPLANAGPDVTSQALQFLEHLKTITHESWSVGWSVWSARNPQDNGPKYSQNARMFGLMLVDDFLANRISLSTDPAAAVATLQQSAVEYIQNEYVAGSGDASVAYIKNKFAQVLAVLLLQTYNLPPPYTLLPTLLSMIRAHPAASPSQQSTLQLPINPLTTDLVLRVLHDLSVTLGSDVTLRAVRSKERLQRDAVIRDEIRANHASNIADSVWRIVEEGFNRVNQGEHASNPNSASGVRSMNFTNAVDLTAAATKIVEDYVSWIDINLVVTNQTVPLLFNVLHHPIPKIRTAAADALHGIVSKGMKPADKLSLAQALNLPQVITPLESRTRTGPSAQNGQSDTSDSNIEFREHLAHLTNGLVLEMCKILEESAAEESTRAAAEDLLNSLLPLVLAFLSDEYDDASEQTFSGVNMILSIYKKARRRGAELTGARAEFLSNLIGVALQKMRFDDEAEWPAGSFGAAEDDDDDDDEEDAKFLEMRRSLQTIVGAIAAIDDKLFSTSVAQLVLSTFASFETSSSDSDGQISWQQIELALYVIHFYGDVMTTATAAPKVGLSPAMFVQSPEAGSKGRAPKLGNEALAGLPLSNLGEMVQKLVQSNVSSFPHPAVQLQFFECLVRYSNFFAARSGCVLDALPAFLDWRGVHHEKLGVCKRVNYLLYRFVRDLRAVAAVPMDYVERLLQGLQDLLVVRAELPQVDADEDPLIKATAPAGYFDSQLYLFETSGILVSLLNNAPNDQVVLLKAISEPLSEQMRQAVQAFQRNPTDLTSVLQVHHLMLALSSLSKGFPDLSPTSTQPEPQWVGVFKSITEQVLVSIGAMNSFSVVREAARGAFARMVSTCGKAVLPYIPGLIDALLSEVTSAELVDFVNFLSLVVNKYKDDVRSIVDQLLLILVERIFFFLNQGVTGTDDAVEKSELQKAYMNLLSSMVQSGMESVFVSDKNVGQLETVLQSVVFYSTNSDAACQRTAFSILHRLVASWAGSSAVNGSTEATLPGFERFIYEHLVPLIFEAPAKDTFDFKDAQSQIVLTEISTLAKTIFQKRGDEMIQFLLEVYLPGINCPPQLAQDFTTNLTTLDSKAFKKYLDAFITRSRGG</sequence>
<evidence type="ECO:0000250" key="1"/>
<evidence type="ECO:0000256" key="2">
    <source>
        <dbReference type="SAM" id="MobiDB-lite"/>
    </source>
</evidence>
<evidence type="ECO:0000305" key="3"/>